<evidence type="ECO:0000255" key="1">
    <source>
        <dbReference type="HAMAP-Rule" id="MF_00156"/>
    </source>
</evidence>
<dbReference type="EC" id="2.1.2.11" evidence="1"/>
<dbReference type="EMBL" id="CP000089">
    <property type="protein sequence ID" value="AAZ47915.1"/>
    <property type="molecule type" value="Genomic_DNA"/>
</dbReference>
<dbReference type="SMR" id="Q47B66"/>
<dbReference type="STRING" id="159087.Daro_3185"/>
<dbReference type="KEGG" id="dar:Daro_3185"/>
<dbReference type="eggNOG" id="COG0413">
    <property type="taxonomic scope" value="Bacteria"/>
</dbReference>
<dbReference type="HOGENOM" id="CLU_036645_1_0_4"/>
<dbReference type="OrthoDB" id="9781789at2"/>
<dbReference type="UniPathway" id="UPA00028">
    <property type="reaction ID" value="UER00003"/>
</dbReference>
<dbReference type="GO" id="GO:0005737">
    <property type="term" value="C:cytoplasm"/>
    <property type="evidence" value="ECO:0007669"/>
    <property type="project" value="UniProtKB-SubCell"/>
</dbReference>
<dbReference type="GO" id="GO:0003864">
    <property type="term" value="F:3-methyl-2-oxobutanoate hydroxymethyltransferase activity"/>
    <property type="evidence" value="ECO:0007669"/>
    <property type="project" value="UniProtKB-UniRule"/>
</dbReference>
<dbReference type="GO" id="GO:0000287">
    <property type="term" value="F:magnesium ion binding"/>
    <property type="evidence" value="ECO:0007669"/>
    <property type="project" value="TreeGrafter"/>
</dbReference>
<dbReference type="GO" id="GO:0015940">
    <property type="term" value="P:pantothenate biosynthetic process"/>
    <property type="evidence" value="ECO:0007669"/>
    <property type="project" value="UniProtKB-UniRule"/>
</dbReference>
<dbReference type="CDD" id="cd06557">
    <property type="entry name" value="KPHMT-like"/>
    <property type="match status" value="1"/>
</dbReference>
<dbReference type="FunFam" id="3.20.20.60:FF:000003">
    <property type="entry name" value="3-methyl-2-oxobutanoate hydroxymethyltransferase"/>
    <property type="match status" value="1"/>
</dbReference>
<dbReference type="Gene3D" id="3.20.20.60">
    <property type="entry name" value="Phosphoenolpyruvate-binding domains"/>
    <property type="match status" value="1"/>
</dbReference>
<dbReference type="HAMAP" id="MF_00156">
    <property type="entry name" value="PanB"/>
    <property type="match status" value="1"/>
</dbReference>
<dbReference type="InterPro" id="IPR003700">
    <property type="entry name" value="Pantoate_hydroxy_MeTrfase"/>
</dbReference>
<dbReference type="InterPro" id="IPR015813">
    <property type="entry name" value="Pyrv/PenolPyrv_kinase-like_dom"/>
</dbReference>
<dbReference type="InterPro" id="IPR040442">
    <property type="entry name" value="Pyrv_kinase-like_dom_sf"/>
</dbReference>
<dbReference type="NCBIfam" id="TIGR00222">
    <property type="entry name" value="panB"/>
    <property type="match status" value="1"/>
</dbReference>
<dbReference type="NCBIfam" id="NF001452">
    <property type="entry name" value="PRK00311.1"/>
    <property type="match status" value="1"/>
</dbReference>
<dbReference type="PANTHER" id="PTHR20881">
    <property type="entry name" value="3-METHYL-2-OXOBUTANOATE HYDROXYMETHYLTRANSFERASE"/>
    <property type="match status" value="1"/>
</dbReference>
<dbReference type="PANTHER" id="PTHR20881:SF0">
    <property type="entry name" value="3-METHYL-2-OXOBUTANOATE HYDROXYMETHYLTRANSFERASE"/>
    <property type="match status" value="1"/>
</dbReference>
<dbReference type="Pfam" id="PF02548">
    <property type="entry name" value="Pantoate_transf"/>
    <property type="match status" value="1"/>
</dbReference>
<dbReference type="PIRSF" id="PIRSF000388">
    <property type="entry name" value="Pantoate_hydroxy_MeTrfase"/>
    <property type="match status" value="1"/>
</dbReference>
<dbReference type="SUPFAM" id="SSF51621">
    <property type="entry name" value="Phosphoenolpyruvate/pyruvate domain"/>
    <property type="match status" value="1"/>
</dbReference>
<name>PANB_DECAR</name>
<protein>
    <recommendedName>
        <fullName evidence="1">3-methyl-2-oxobutanoate hydroxymethyltransferase</fullName>
        <ecNumber evidence="1">2.1.2.11</ecNumber>
    </recommendedName>
    <alternativeName>
        <fullName evidence="1">Ketopantoate hydroxymethyltransferase</fullName>
        <shortName evidence="1">KPHMT</shortName>
    </alternativeName>
</protein>
<proteinExistence type="inferred from homology"/>
<accession>Q47B66</accession>
<gene>
    <name evidence="1" type="primary">panB</name>
    <name type="ordered locus">Daro_3185</name>
</gene>
<comment type="function">
    <text evidence="1">Catalyzes the reversible reaction in which hydroxymethyl group from 5,10-methylenetetrahydrofolate is transferred onto alpha-ketoisovalerate to form ketopantoate.</text>
</comment>
<comment type="catalytic activity">
    <reaction evidence="1">
        <text>3-methyl-2-oxobutanoate + (6R)-5,10-methylene-5,6,7,8-tetrahydrofolate + H2O = 2-dehydropantoate + (6S)-5,6,7,8-tetrahydrofolate</text>
        <dbReference type="Rhea" id="RHEA:11824"/>
        <dbReference type="ChEBI" id="CHEBI:11561"/>
        <dbReference type="ChEBI" id="CHEBI:11851"/>
        <dbReference type="ChEBI" id="CHEBI:15377"/>
        <dbReference type="ChEBI" id="CHEBI:15636"/>
        <dbReference type="ChEBI" id="CHEBI:57453"/>
        <dbReference type="EC" id="2.1.2.11"/>
    </reaction>
</comment>
<comment type="cofactor">
    <cofactor evidence="1">
        <name>Mg(2+)</name>
        <dbReference type="ChEBI" id="CHEBI:18420"/>
    </cofactor>
    <text evidence="1">Binds 1 Mg(2+) ion per subunit.</text>
</comment>
<comment type="pathway">
    <text evidence="1">Cofactor biosynthesis; (R)-pantothenate biosynthesis; (R)-pantoate from 3-methyl-2-oxobutanoate: step 1/2.</text>
</comment>
<comment type="subunit">
    <text evidence="1">Homodecamer; pentamer of dimers.</text>
</comment>
<comment type="subcellular location">
    <subcellularLocation>
        <location evidence="1">Cytoplasm</location>
    </subcellularLocation>
</comment>
<comment type="similarity">
    <text evidence="1">Belongs to the PanB family.</text>
</comment>
<organism>
    <name type="scientific">Dechloromonas aromatica (strain RCB)</name>
    <dbReference type="NCBI Taxonomy" id="159087"/>
    <lineage>
        <taxon>Bacteria</taxon>
        <taxon>Pseudomonadati</taxon>
        <taxon>Pseudomonadota</taxon>
        <taxon>Betaproteobacteria</taxon>
        <taxon>Rhodocyclales</taxon>
        <taxon>Azonexaceae</taxon>
        <taxon>Dechloromonas</taxon>
    </lineage>
</organism>
<reference key="1">
    <citation type="journal article" date="2009" name="BMC Genomics">
        <title>Metabolic analysis of the soil microbe Dechloromonas aromatica str. RCB: indications of a surprisingly complex life-style and cryptic anaerobic pathways for aromatic degradation.</title>
        <authorList>
            <person name="Salinero K.K."/>
            <person name="Keller K."/>
            <person name="Feil W.S."/>
            <person name="Feil H."/>
            <person name="Trong S."/>
            <person name="Di Bartolo G."/>
            <person name="Lapidus A."/>
        </authorList>
    </citation>
    <scope>NUCLEOTIDE SEQUENCE [LARGE SCALE GENOMIC DNA]</scope>
    <source>
        <strain>RCB</strain>
    </source>
</reference>
<sequence>MSAQVATRRLTQADLAKLYQAGEKIAQFTCYDASFARLLDGAGVDSILIGDSLGNVIQGHDTTLPVTVADIAYHTAAVKRGCDRAFIVADMPFGSYQESPEQAFRNAATLMAAGAQMVKLEGGADMAPTVRFMVSRGIPVCGHIGLTPQSVHVLGGYKVQGKGEAAAQRLKDDAMALKAAGATMLLLEAIPATLAAEVTAMTGVITIGIGAGKDCSGQVMVLHDAFDIPPGKKAKFVKNFMEGASSIHDAACRAIAAVKDGSYPGPEHTYSA</sequence>
<feature type="chain" id="PRO_0000297255" description="3-methyl-2-oxobutanoate hydroxymethyltransferase">
    <location>
        <begin position="1"/>
        <end position="272"/>
    </location>
</feature>
<feature type="active site" description="Proton acceptor" evidence="1">
    <location>
        <position position="188"/>
    </location>
</feature>
<feature type="binding site" evidence="1">
    <location>
        <begin position="51"/>
        <end position="52"/>
    </location>
    <ligand>
        <name>3-methyl-2-oxobutanoate</name>
        <dbReference type="ChEBI" id="CHEBI:11851"/>
    </ligand>
</feature>
<feature type="binding site" evidence="1">
    <location>
        <position position="51"/>
    </location>
    <ligand>
        <name>Mg(2+)</name>
        <dbReference type="ChEBI" id="CHEBI:18420"/>
    </ligand>
</feature>
<feature type="binding site" evidence="1">
    <location>
        <position position="90"/>
    </location>
    <ligand>
        <name>3-methyl-2-oxobutanoate</name>
        <dbReference type="ChEBI" id="CHEBI:11851"/>
    </ligand>
</feature>
<feature type="binding site" evidence="1">
    <location>
        <position position="90"/>
    </location>
    <ligand>
        <name>Mg(2+)</name>
        <dbReference type="ChEBI" id="CHEBI:18420"/>
    </ligand>
</feature>
<feature type="binding site" evidence="1">
    <location>
        <position position="119"/>
    </location>
    <ligand>
        <name>3-methyl-2-oxobutanoate</name>
        <dbReference type="ChEBI" id="CHEBI:11851"/>
    </ligand>
</feature>
<feature type="binding site" evidence="1">
    <location>
        <position position="121"/>
    </location>
    <ligand>
        <name>Mg(2+)</name>
        <dbReference type="ChEBI" id="CHEBI:18420"/>
    </ligand>
</feature>
<keyword id="KW-0963">Cytoplasm</keyword>
<keyword id="KW-0460">Magnesium</keyword>
<keyword id="KW-0479">Metal-binding</keyword>
<keyword id="KW-0566">Pantothenate biosynthesis</keyword>
<keyword id="KW-0808">Transferase</keyword>